<proteinExistence type="inferred from homology"/>
<accession>Q3MA36</accession>
<sequence>MATTERKPLLLDFEKPLAELANRIDQIRQLAEENGVDVSGEIRKLETRAMQLREEIFSTLSPSQRLQVARHPRRPSTLDYIQAISDEWMELHGDRCGGDDPALIGGVARLGGKPVVMLGHQKGRDTKDNIARNFGMATPGGYRKAMRLMEHANKFSMPILTFIDTPGALPTVVAERQGAGEAIAYNLREMFSLDVPIICTVIGEGGSGGALGIGVGDRLLMFEHSVYTVATPEACAAILWKDASKSPQAAVALKIVSHDLKNLGIIDQILPEPTGGAHSDPLTAATTLKQALLDNLDELDRLTSQERRQLRYDKFRKIGVFTEVAH</sequence>
<organism>
    <name type="scientific">Trichormus variabilis (strain ATCC 29413 / PCC 7937)</name>
    <name type="common">Anabaena variabilis</name>
    <dbReference type="NCBI Taxonomy" id="240292"/>
    <lineage>
        <taxon>Bacteria</taxon>
        <taxon>Bacillati</taxon>
        <taxon>Cyanobacteriota</taxon>
        <taxon>Cyanophyceae</taxon>
        <taxon>Nostocales</taxon>
        <taxon>Nostocaceae</taxon>
        <taxon>Trichormus</taxon>
    </lineage>
</organism>
<reference key="1">
    <citation type="journal article" date="2014" name="Stand. Genomic Sci.">
        <title>Complete genome sequence of Anabaena variabilis ATCC 29413.</title>
        <authorList>
            <person name="Thiel T."/>
            <person name="Pratte B.S."/>
            <person name="Zhong J."/>
            <person name="Goodwin L."/>
            <person name="Copeland A."/>
            <person name="Lucas S."/>
            <person name="Han C."/>
            <person name="Pitluck S."/>
            <person name="Land M.L."/>
            <person name="Kyrpides N.C."/>
            <person name="Woyke T."/>
        </authorList>
    </citation>
    <scope>NUCLEOTIDE SEQUENCE [LARGE SCALE GENOMIC DNA]</scope>
    <source>
        <strain>ATCC 29413 / PCC 7937</strain>
    </source>
</reference>
<evidence type="ECO:0000255" key="1">
    <source>
        <dbReference type="HAMAP-Rule" id="MF_00823"/>
    </source>
</evidence>
<evidence type="ECO:0000255" key="2">
    <source>
        <dbReference type="PROSITE-ProRule" id="PRU01137"/>
    </source>
</evidence>
<name>ACCA_TRIV2</name>
<protein>
    <recommendedName>
        <fullName evidence="1">Acetyl-coenzyme A carboxylase carboxyl transferase subunit alpha</fullName>
        <shortName evidence="1">ACCase subunit alpha</shortName>
        <shortName evidence="1">Acetyl-CoA carboxylase carboxyltransferase subunit alpha</shortName>
        <ecNumber evidence="1">2.1.3.15</ecNumber>
    </recommendedName>
</protein>
<comment type="function">
    <text evidence="1">Component of the acetyl coenzyme A carboxylase (ACC) complex. First, biotin carboxylase catalyzes the carboxylation of biotin on its carrier protein (BCCP) and then the CO(2) group is transferred by the carboxyltransferase to acetyl-CoA to form malonyl-CoA.</text>
</comment>
<comment type="catalytic activity">
    <reaction evidence="1">
        <text>N(6)-carboxybiotinyl-L-lysyl-[protein] + acetyl-CoA = N(6)-biotinyl-L-lysyl-[protein] + malonyl-CoA</text>
        <dbReference type="Rhea" id="RHEA:54728"/>
        <dbReference type="Rhea" id="RHEA-COMP:10505"/>
        <dbReference type="Rhea" id="RHEA-COMP:10506"/>
        <dbReference type="ChEBI" id="CHEBI:57288"/>
        <dbReference type="ChEBI" id="CHEBI:57384"/>
        <dbReference type="ChEBI" id="CHEBI:83144"/>
        <dbReference type="ChEBI" id="CHEBI:83145"/>
        <dbReference type="EC" id="2.1.3.15"/>
    </reaction>
</comment>
<comment type="pathway">
    <text evidence="1">Lipid metabolism; malonyl-CoA biosynthesis; malonyl-CoA from acetyl-CoA: step 1/1.</text>
</comment>
<comment type="subunit">
    <text evidence="1">Acetyl-CoA carboxylase is a heterohexamer composed of biotin carboxyl carrier protein (AccB), biotin carboxylase (AccC) and two subunits each of ACCase subunit alpha (AccA) and ACCase subunit beta (AccD).</text>
</comment>
<comment type="subcellular location">
    <subcellularLocation>
        <location evidence="1">Cytoplasm</location>
    </subcellularLocation>
</comment>
<comment type="similarity">
    <text evidence="1">Belongs to the AccA family.</text>
</comment>
<gene>
    <name evidence="1" type="primary">accA</name>
    <name type="ordered locus">Ava_2535</name>
</gene>
<keyword id="KW-0067">ATP-binding</keyword>
<keyword id="KW-0963">Cytoplasm</keyword>
<keyword id="KW-0275">Fatty acid biosynthesis</keyword>
<keyword id="KW-0276">Fatty acid metabolism</keyword>
<keyword id="KW-0444">Lipid biosynthesis</keyword>
<keyword id="KW-0443">Lipid metabolism</keyword>
<keyword id="KW-0547">Nucleotide-binding</keyword>
<keyword id="KW-0808">Transferase</keyword>
<feature type="chain" id="PRO_1000062574" description="Acetyl-coenzyme A carboxylase carboxyl transferase subunit alpha">
    <location>
        <begin position="1"/>
        <end position="326"/>
    </location>
</feature>
<feature type="domain" description="CoA carboxyltransferase C-terminal" evidence="2">
    <location>
        <begin position="44"/>
        <end position="298"/>
    </location>
</feature>
<dbReference type="EC" id="2.1.3.15" evidence="1"/>
<dbReference type="EMBL" id="CP000117">
    <property type="protein sequence ID" value="ABA22150.1"/>
    <property type="molecule type" value="Genomic_DNA"/>
</dbReference>
<dbReference type="SMR" id="Q3MA36"/>
<dbReference type="STRING" id="240292.Ava_2535"/>
<dbReference type="KEGG" id="ava:Ava_2535"/>
<dbReference type="eggNOG" id="COG0825">
    <property type="taxonomic scope" value="Bacteria"/>
</dbReference>
<dbReference type="HOGENOM" id="CLU_015486_0_2_3"/>
<dbReference type="UniPathway" id="UPA00655">
    <property type="reaction ID" value="UER00711"/>
</dbReference>
<dbReference type="Proteomes" id="UP000002533">
    <property type="component" value="Chromosome"/>
</dbReference>
<dbReference type="GO" id="GO:0009317">
    <property type="term" value="C:acetyl-CoA carboxylase complex"/>
    <property type="evidence" value="ECO:0007669"/>
    <property type="project" value="InterPro"/>
</dbReference>
<dbReference type="GO" id="GO:0003989">
    <property type="term" value="F:acetyl-CoA carboxylase activity"/>
    <property type="evidence" value="ECO:0007669"/>
    <property type="project" value="InterPro"/>
</dbReference>
<dbReference type="GO" id="GO:0005524">
    <property type="term" value="F:ATP binding"/>
    <property type="evidence" value="ECO:0007669"/>
    <property type="project" value="UniProtKB-KW"/>
</dbReference>
<dbReference type="GO" id="GO:0016743">
    <property type="term" value="F:carboxyl- or carbamoyltransferase activity"/>
    <property type="evidence" value="ECO:0007669"/>
    <property type="project" value="UniProtKB-UniRule"/>
</dbReference>
<dbReference type="GO" id="GO:0006633">
    <property type="term" value="P:fatty acid biosynthetic process"/>
    <property type="evidence" value="ECO:0007669"/>
    <property type="project" value="UniProtKB-KW"/>
</dbReference>
<dbReference type="GO" id="GO:2001295">
    <property type="term" value="P:malonyl-CoA biosynthetic process"/>
    <property type="evidence" value="ECO:0007669"/>
    <property type="project" value="UniProtKB-UniRule"/>
</dbReference>
<dbReference type="Gene3D" id="3.90.226.10">
    <property type="entry name" value="2-enoyl-CoA Hydratase, Chain A, domain 1"/>
    <property type="match status" value="1"/>
</dbReference>
<dbReference type="HAMAP" id="MF_00823">
    <property type="entry name" value="AcetylCoA_CT_alpha"/>
    <property type="match status" value="1"/>
</dbReference>
<dbReference type="InterPro" id="IPR001095">
    <property type="entry name" value="Acetyl_CoA_COase_a_su"/>
</dbReference>
<dbReference type="InterPro" id="IPR029045">
    <property type="entry name" value="ClpP/crotonase-like_dom_sf"/>
</dbReference>
<dbReference type="InterPro" id="IPR011763">
    <property type="entry name" value="COA_CT_C"/>
</dbReference>
<dbReference type="NCBIfam" id="TIGR00513">
    <property type="entry name" value="accA"/>
    <property type="match status" value="1"/>
</dbReference>
<dbReference type="NCBIfam" id="NF041504">
    <property type="entry name" value="AccA_sub"/>
    <property type="match status" value="1"/>
</dbReference>
<dbReference type="NCBIfam" id="NF004344">
    <property type="entry name" value="PRK05724.1"/>
    <property type="match status" value="1"/>
</dbReference>
<dbReference type="PANTHER" id="PTHR42853">
    <property type="entry name" value="ACETYL-COENZYME A CARBOXYLASE CARBOXYL TRANSFERASE SUBUNIT ALPHA"/>
    <property type="match status" value="1"/>
</dbReference>
<dbReference type="PANTHER" id="PTHR42853:SF3">
    <property type="entry name" value="ACETYL-COENZYME A CARBOXYLASE CARBOXYL TRANSFERASE SUBUNIT ALPHA, CHLOROPLASTIC"/>
    <property type="match status" value="1"/>
</dbReference>
<dbReference type="Pfam" id="PF03255">
    <property type="entry name" value="ACCA"/>
    <property type="match status" value="1"/>
</dbReference>
<dbReference type="PRINTS" id="PR01069">
    <property type="entry name" value="ACCCTRFRASEA"/>
</dbReference>
<dbReference type="SUPFAM" id="SSF52096">
    <property type="entry name" value="ClpP/crotonase"/>
    <property type="match status" value="1"/>
</dbReference>
<dbReference type="PROSITE" id="PS50989">
    <property type="entry name" value="COA_CT_CTER"/>
    <property type="match status" value="1"/>
</dbReference>